<evidence type="ECO:0000255" key="1">
    <source>
        <dbReference type="HAMAP-Rule" id="MF_00023"/>
    </source>
</evidence>
<proteinExistence type="inferred from homology"/>
<keyword id="KW-0963">Cytoplasm</keyword>
<keyword id="KW-0694">RNA-binding</keyword>
<dbReference type="EMBL" id="CP000027">
    <property type="protein sequence ID" value="AAW39291.1"/>
    <property type="molecule type" value="Genomic_DNA"/>
</dbReference>
<dbReference type="RefSeq" id="WP_010937183.1">
    <property type="nucleotide sequence ID" value="NC_002936.3"/>
</dbReference>
<dbReference type="SMR" id="Q3Z6E3"/>
<dbReference type="FunCoup" id="Q3Z6E3">
    <property type="interactions" value="241"/>
</dbReference>
<dbReference type="STRING" id="243164.DET1506"/>
<dbReference type="GeneID" id="3229249"/>
<dbReference type="KEGG" id="det:DET1506"/>
<dbReference type="PATRIC" id="fig|243164.10.peg.1422"/>
<dbReference type="eggNOG" id="COG0691">
    <property type="taxonomic scope" value="Bacteria"/>
</dbReference>
<dbReference type="HOGENOM" id="CLU_108953_0_0_0"/>
<dbReference type="InParanoid" id="Q3Z6E3"/>
<dbReference type="Proteomes" id="UP000008289">
    <property type="component" value="Chromosome"/>
</dbReference>
<dbReference type="GO" id="GO:0005829">
    <property type="term" value="C:cytosol"/>
    <property type="evidence" value="ECO:0007669"/>
    <property type="project" value="TreeGrafter"/>
</dbReference>
<dbReference type="GO" id="GO:0003723">
    <property type="term" value="F:RNA binding"/>
    <property type="evidence" value="ECO:0007669"/>
    <property type="project" value="UniProtKB-UniRule"/>
</dbReference>
<dbReference type="GO" id="GO:0070929">
    <property type="term" value="P:trans-translation"/>
    <property type="evidence" value="ECO:0007669"/>
    <property type="project" value="UniProtKB-UniRule"/>
</dbReference>
<dbReference type="CDD" id="cd09294">
    <property type="entry name" value="SmpB"/>
    <property type="match status" value="1"/>
</dbReference>
<dbReference type="Gene3D" id="2.40.280.10">
    <property type="match status" value="1"/>
</dbReference>
<dbReference type="HAMAP" id="MF_00023">
    <property type="entry name" value="SmpB"/>
    <property type="match status" value="1"/>
</dbReference>
<dbReference type="InterPro" id="IPR023620">
    <property type="entry name" value="SmpB"/>
</dbReference>
<dbReference type="InterPro" id="IPR000037">
    <property type="entry name" value="SsrA-bd_prot"/>
</dbReference>
<dbReference type="InterPro" id="IPR020081">
    <property type="entry name" value="SsrA-bd_prot_CS"/>
</dbReference>
<dbReference type="NCBIfam" id="NF003843">
    <property type="entry name" value="PRK05422.1"/>
    <property type="match status" value="1"/>
</dbReference>
<dbReference type="NCBIfam" id="TIGR00086">
    <property type="entry name" value="smpB"/>
    <property type="match status" value="1"/>
</dbReference>
<dbReference type="PANTHER" id="PTHR30308:SF2">
    <property type="entry name" value="SSRA-BINDING PROTEIN"/>
    <property type="match status" value="1"/>
</dbReference>
<dbReference type="PANTHER" id="PTHR30308">
    <property type="entry name" value="TMRNA-BINDING COMPONENT OF TRANS-TRANSLATION TAGGING COMPLEX"/>
    <property type="match status" value="1"/>
</dbReference>
<dbReference type="Pfam" id="PF01668">
    <property type="entry name" value="SmpB"/>
    <property type="match status" value="1"/>
</dbReference>
<dbReference type="SUPFAM" id="SSF74982">
    <property type="entry name" value="Small protein B (SmpB)"/>
    <property type="match status" value="1"/>
</dbReference>
<dbReference type="PROSITE" id="PS01317">
    <property type="entry name" value="SSRP"/>
    <property type="match status" value="1"/>
</dbReference>
<name>SSRP_DEHM1</name>
<feature type="chain" id="PRO_0000331038" description="SsrA-binding protein">
    <location>
        <begin position="1"/>
        <end position="172"/>
    </location>
</feature>
<accession>Q3Z6E3</accession>
<protein>
    <recommendedName>
        <fullName evidence="1">SsrA-binding protein</fullName>
    </recommendedName>
    <alternativeName>
        <fullName evidence="1">Small protein B</fullName>
    </alternativeName>
</protein>
<reference key="1">
    <citation type="journal article" date="2005" name="Science">
        <title>Genome sequence of the PCE-dechlorinating bacterium Dehalococcoides ethenogenes.</title>
        <authorList>
            <person name="Seshadri R."/>
            <person name="Adrian L."/>
            <person name="Fouts D.E."/>
            <person name="Eisen J.A."/>
            <person name="Phillippy A.M."/>
            <person name="Methe B.A."/>
            <person name="Ward N.L."/>
            <person name="Nelson W.C."/>
            <person name="DeBoy R.T."/>
            <person name="Khouri H.M."/>
            <person name="Kolonay J.F."/>
            <person name="Dodson R.J."/>
            <person name="Daugherty S.C."/>
            <person name="Brinkac L.M."/>
            <person name="Sullivan S.A."/>
            <person name="Madupu R."/>
            <person name="Nelson K.E."/>
            <person name="Kang K.H."/>
            <person name="Impraim M."/>
            <person name="Tran K."/>
            <person name="Robinson J.M."/>
            <person name="Forberger H.A."/>
            <person name="Fraser C.M."/>
            <person name="Zinder S.H."/>
            <person name="Heidelberg J.F."/>
        </authorList>
    </citation>
    <scope>NUCLEOTIDE SEQUENCE [LARGE SCALE GENOMIC DNA]</scope>
    <source>
        <strain>ATCC BAA-2266 / KCTC 15142 / 195</strain>
    </source>
</reference>
<gene>
    <name evidence="1" type="primary">smpB</name>
    <name type="ordered locus">DET1506</name>
</gene>
<organism>
    <name type="scientific">Dehalococcoides mccartyi (strain ATCC BAA-2266 / KCTC 15142 / 195)</name>
    <name type="common">Dehalococcoides ethenogenes (strain 195)</name>
    <dbReference type="NCBI Taxonomy" id="243164"/>
    <lineage>
        <taxon>Bacteria</taxon>
        <taxon>Bacillati</taxon>
        <taxon>Chloroflexota</taxon>
        <taxon>Dehalococcoidia</taxon>
        <taxon>Dehalococcoidales</taxon>
        <taxon>Dehalococcoidaceae</taxon>
        <taxon>Dehalococcoides</taxon>
    </lineage>
</organism>
<comment type="function">
    <text evidence="1">Required for rescue of stalled ribosomes mediated by trans-translation. Binds to transfer-messenger RNA (tmRNA), required for stable association of tmRNA with ribosomes. tmRNA and SmpB together mimic tRNA shape, replacing the anticodon stem-loop with SmpB. tmRNA is encoded by the ssrA gene; the 2 termini fold to resemble tRNA(Ala) and it encodes a 'tag peptide', a short internal open reading frame. During trans-translation Ala-aminoacylated tmRNA acts like a tRNA, entering the A-site of stalled ribosomes, displacing the stalled mRNA. The ribosome then switches to translate the ORF on the tmRNA; the nascent peptide is terminated with the 'tag peptide' encoded by the tmRNA and targeted for degradation. The ribosome is freed to recommence translation, which seems to be the essential function of trans-translation.</text>
</comment>
<comment type="subcellular location">
    <subcellularLocation>
        <location evidence="1">Cytoplasm</location>
    </subcellularLocation>
    <text evidence="1">The tmRNA-SmpB complex associates with stalled 70S ribosomes.</text>
</comment>
<comment type="similarity">
    <text evidence="1">Belongs to the SmpB family.</text>
</comment>
<sequence length="172" mass="20294">MHYARIVSNLHLGYDIIHMAEYVTLTTNRKAFHNYFLEEKYEAGIMLLGTEIKSLRSGRVNMGDAYVKPQRGELWLVNAHISAYECSGHTSHEPMRERKLLMHRKEIALLMSKVKEKGLTLIPVRIYLKNDIAKVELSLGRGKKLYDKRDTITKRDTERELEREVKYRNFRR</sequence>